<feature type="chain" id="PRO_1000063365" description="Phosphoribosyl-ATP pyrophosphatase">
    <location>
        <begin position="1"/>
        <end position="87"/>
    </location>
</feature>
<comment type="catalytic activity">
    <reaction evidence="1">
        <text>1-(5-phospho-beta-D-ribosyl)-ATP + H2O = 1-(5-phospho-beta-D-ribosyl)-5'-AMP + diphosphate + H(+)</text>
        <dbReference type="Rhea" id="RHEA:22828"/>
        <dbReference type="ChEBI" id="CHEBI:15377"/>
        <dbReference type="ChEBI" id="CHEBI:15378"/>
        <dbReference type="ChEBI" id="CHEBI:33019"/>
        <dbReference type="ChEBI" id="CHEBI:59457"/>
        <dbReference type="ChEBI" id="CHEBI:73183"/>
        <dbReference type="EC" id="3.6.1.31"/>
    </reaction>
</comment>
<comment type="pathway">
    <text evidence="1">Amino-acid biosynthesis; L-histidine biosynthesis; L-histidine from 5-phospho-alpha-D-ribose 1-diphosphate: step 2/9.</text>
</comment>
<comment type="subcellular location">
    <subcellularLocation>
        <location evidence="1">Cytoplasm</location>
    </subcellularLocation>
</comment>
<comment type="similarity">
    <text evidence="1">Belongs to the PRA-PH family.</text>
</comment>
<dbReference type="EC" id="3.6.1.31" evidence="1"/>
<dbReference type="EMBL" id="CP000509">
    <property type="protein sequence ID" value="ABL81955.1"/>
    <property type="molecule type" value="Genomic_DNA"/>
</dbReference>
<dbReference type="RefSeq" id="WP_011755896.1">
    <property type="nucleotide sequence ID" value="NC_008699.1"/>
</dbReference>
<dbReference type="SMR" id="A1SJH0"/>
<dbReference type="STRING" id="196162.Noca_2451"/>
<dbReference type="KEGG" id="nca:Noca_2451"/>
<dbReference type="eggNOG" id="COG0140">
    <property type="taxonomic scope" value="Bacteria"/>
</dbReference>
<dbReference type="HOGENOM" id="CLU_123337_2_1_11"/>
<dbReference type="OrthoDB" id="3212875at2"/>
<dbReference type="UniPathway" id="UPA00031">
    <property type="reaction ID" value="UER00007"/>
</dbReference>
<dbReference type="Proteomes" id="UP000000640">
    <property type="component" value="Chromosome"/>
</dbReference>
<dbReference type="GO" id="GO:0005737">
    <property type="term" value="C:cytoplasm"/>
    <property type="evidence" value="ECO:0007669"/>
    <property type="project" value="UniProtKB-SubCell"/>
</dbReference>
<dbReference type="GO" id="GO:0005524">
    <property type="term" value="F:ATP binding"/>
    <property type="evidence" value="ECO:0007669"/>
    <property type="project" value="UniProtKB-KW"/>
</dbReference>
<dbReference type="GO" id="GO:0004636">
    <property type="term" value="F:phosphoribosyl-ATP diphosphatase activity"/>
    <property type="evidence" value="ECO:0007669"/>
    <property type="project" value="UniProtKB-UniRule"/>
</dbReference>
<dbReference type="GO" id="GO:0000105">
    <property type="term" value="P:L-histidine biosynthetic process"/>
    <property type="evidence" value="ECO:0007669"/>
    <property type="project" value="UniProtKB-UniRule"/>
</dbReference>
<dbReference type="CDD" id="cd11547">
    <property type="entry name" value="NTP-PPase_HisE"/>
    <property type="match status" value="1"/>
</dbReference>
<dbReference type="Gene3D" id="1.10.287.1080">
    <property type="entry name" value="MazG-like"/>
    <property type="match status" value="1"/>
</dbReference>
<dbReference type="HAMAP" id="MF_01020">
    <property type="entry name" value="HisE"/>
    <property type="match status" value="1"/>
</dbReference>
<dbReference type="InterPro" id="IPR008179">
    <property type="entry name" value="HisE"/>
</dbReference>
<dbReference type="InterPro" id="IPR021130">
    <property type="entry name" value="PRib-ATP_PPHydrolase-like"/>
</dbReference>
<dbReference type="NCBIfam" id="TIGR03188">
    <property type="entry name" value="histidine_hisI"/>
    <property type="match status" value="1"/>
</dbReference>
<dbReference type="NCBIfam" id="NF001610">
    <property type="entry name" value="PRK00400.1-1"/>
    <property type="match status" value="1"/>
</dbReference>
<dbReference type="PANTHER" id="PTHR42945">
    <property type="entry name" value="HISTIDINE BIOSYNTHESIS BIFUNCTIONAL PROTEIN"/>
    <property type="match status" value="1"/>
</dbReference>
<dbReference type="PANTHER" id="PTHR42945:SF1">
    <property type="entry name" value="HISTIDINE BIOSYNTHESIS BIFUNCTIONAL PROTEIN HIS7"/>
    <property type="match status" value="1"/>
</dbReference>
<dbReference type="Pfam" id="PF01503">
    <property type="entry name" value="PRA-PH"/>
    <property type="match status" value="1"/>
</dbReference>
<dbReference type="SUPFAM" id="SSF101386">
    <property type="entry name" value="all-alpha NTP pyrophosphatases"/>
    <property type="match status" value="1"/>
</dbReference>
<sequence>MKTFDELWAELSEKARSRPEGSGTVRALDAGVHGIGKKLVEEAAESWMAAEHEGPERAAEEISQLLYHAQVLMLATGIDLDDVYAHL</sequence>
<keyword id="KW-0028">Amino-acid biosynthesis</keyword>
<keyword id="KW-0067">ATP-binding</keyword>
<keyword id="KW-0963">Cytoplasm</keyword>
<keyword id="KW-0368">Histidine biosynthesis</keyword>
<keyword id="KW-0378">Hydrolase</keyword>
<keyword id="KW-0547">Nucleotide-binding</keyword>
<keyword id="KW-1185">Reference proteome</keyword>
<organism>
    <name type="scientific">Nocardioides sp. (strain ATCC BAA-499 / JS614)</name>
    <dbReference type="NCBI Taxonomy" id="196162"/>
    <lineage>
        <taxon>Bacteria</taxon>
        <taxon>Bacillati</taxon>
        <taxon>Actinomycetota</taxon>
        <taxon>Actinomycetes</taxon>
        <taxon>Propionibacteriales</taxon>
        <taxon>Nocardioidaceae</taxon>
        <taxon>Nocardioides</taxon>
    </lineage>
</organism>
<protein>
    <recommendedName>
        <fullName evidence="1">Phosphoribosyl-ATP pyrophosphatase</fullName>
        <shortName evidence="1">PRA-PH</shortName>
        <ecNumber evidence="1">3.6.1.31</ecNumber>
    </recommendedName>
</protein>
<accession>A1SJH0</accession>
<gene>
    <name evidence="1" type="primary">hisE</name>
    <name type="ordered locus">Noca_2451</name>
</gene>
<evidence type="ECO:0000255" key="1">
    <source>
        <dbReference type="HAMAP-Rule" id="MF_01020"/>
    </source>
</evidence>
<name>HIS2_NOCSJ</name>
<reference key="1">
    <citation type="submission" date="2006-12" db="EMBL/GenBank/DDBJ databases">
        <title>Complete sequence of chromosome 1 of Nocardioides sp. JS614.</title>
        <authorList>
            <person name="Copeland A."/>
            <person name="Lucas S."/>
            <person name="Lapidus A."/>
            <person name="Barry K."/>
            <person name="Detter J.C."/>
            <person name="Glavina del Rio T."/>
            <person name="Hammon N."/>
            <person name="Israni S."/>
            <person name="Dalin E."/>
            <person name="Tice H."/>
            <person name="Pitluck S."/>
            <person name="Thompson L.S."/>
            <person name="Brettin T."/>
            <person name="Bruce D."/>
            <person name="Han C."/>
            <person name="Tapia R."/>
            <person name="Schmutz J."/>
            <person name="Larimer F."/>
            <person name="Land M."/>
            <person name="Hauser L."/>
            <person name="Kyrpides N."/>
            <person name="Kim E."/>
            <person name="Mattes T."/>
            <person name="Gossett J."/>
            <person name="Richardson P."/>
        </authorList>
    </citation>
    <scope>NUCLEOTIDE SEQUENCE [LARGE SCALE GENOMIC DNA]</scope>
    <source>
        <strain>ATCC BAA-499 / JS614</strain>
    </source>
</reference>
<proteinExistence type="inferred from homology"/>